<dbReference type="EMBL" id="AE017125">
    <property type="protein sequence ID" value="AAP77536.1"/>
    <property type="molecule type" value="Genomic_DNA"/>
</dbReference>
<dbReference type="RefSeq" id="WP_011115779.1">
    <property type="nucleotide sequence ID" value="NC_004917.1"/>
</dbReference>
<dbReference type="SMR" id="Q7VHM7"/>
<dbReference type="STRING" id="235279.HH_0939"/>
<dbReference type="KEGG" id="hhe:HH_0939"/>
<dbReference type="eggNOG" id="COG0228">
    <property type="taxonomic scope" value="Bacteria"/>
</dbReference>
<dbReference type="HOGENOM" id="CLU_100590_5_1_7"/>
<dbReference type="OrthoDB" id="9807878at2"/>
<dbReference type="Proteomes" id="UP000002495">
    <property type="component" value="Chromosome"/>
</dbReference>
<dbReference type="GO" id="GO:0005737">
    <property type="term" value="C:cytoplasm"/>
    <property type="evidence" value="ECO:0007669"/>
    <property type="project" value="UniProtKB-ARBA"/>
</dbReference>
<dbReference type="GO" id="GO:0015935">
    <property type="term" value="C:small ribosomal subunit"/>
    <property type="evidence" value="ECO:0007669"/>
    <property type="project" value="TreeGrafter"/>
</dbReference>
<dbReference type="GO" id="GO:0003735">
    <property type="term" value="F:structural constituent of ribosome"/>
    <property type="evidence" value="ECO:0007669"/>
    <property type="project" value="InterPro"/>
</dbReference>
<dbReference type="GO" id="GO:0006412">
    <property type="term" value="P:translation"/>
    <property type="evidence" value="ECO:0007669"/>
    <property type="project" value="UniProtKB-UniRule"/>
</dbReference>
<dbReference type="Gene3D" id="3.30.1320.10">
    <property type="match status" value="1"/>
</dbReference>
<dbReference type="HAMAP" id="MF_00385">
    <property type="entry name" value="Ribosomal_bS16"/>
    <property type="match status" value="1"/>
</dbReference>
<dbReference type="InterPro" id="IPR000307">
    <property type="entry name" value="Ribosomal_bS16"/>
</dbReference>
<dbReference type="InterPro" id="IPR023803">
    <property type="entry name" value="Ribosomal_bS16_dom_sf"/>
</dbReference>
<dbReference type="NCBIfam" id="TIGR00002">
    <property type="entry name" value="S16"/>
    <property type="match status" value="1"/>
</dbReference>
<dbReference type="PANTHER" id="PTHR12919">
    <property type="entry name" value="30S RIBOSOMAL PROTEIN S16"/>
    <property type="match status" value="1"/>
</dbReference>
<dbReference type="PANTHER" id="PTHR12919:SF20">
    <property type="entry name" value="SMALL RIBOSOMAL SUBUNIT PROTEIN BS16M"/>
    <property type="match status" value="1"/>
</dbReference>
<dbReference type="Pfam" id="PF00886">
    <property type="entry name" value="Ribosomal_S16"/>
    <property type="match status" value="1"/>
</dbReference>
<dbReference type="SUPFAM" id="SSF54565">
    <property type="entry name" value="Ribosomal protein S16"/>
    <property type="match status" value="1"/>
</dbReference>
<protein>
    <recommendedName>
        <fullName evidence="1">Small ribosomal subunit protein bS16</fullName>
    </recommendedName>
    <alternativeName>
        <fullName evidence="2">30S ribosomal protein S16</fullName>
    </alternativeName>
</protein>
<comment type="similarity">
    <text evidence="1">Belongs to the bacterial ribosomal protein bS16 family.</text>
</comment>
<reference key="1">
    <citation type="journal article" date="2003" name="Proc. Natl. Acad. Sci. U.S.A.">
        <title>The complete genome sequence of the carcinogenic bacterium Helicobacter hepaticus.</title>
        <authorList>
            <person name="Suerbaum S."/>
            <person name="Josenhans C."/>
            <person name="Sterzenbach T."/>
            <person name="Drescher B."/>
            <person name="Brandt P."/>
            <person name="Bell M."/>
            <person name="Droege M."/>
            <person name="Fartmann B."/>
            <person name="Fischer H.-P."/>
            <person name="Ge Z."/>
            <person name="Hoerster A."/>
            <person name="Holland R."/>
            <person name="Klein K."/>
            <person name="Koenig J."/>
            <person name="Macko L."/>
            <person name="Mendz G.L."/>
            <person name="Nyakatura G."/>
            <person name="Schauer D.B."/>
            <person name="Shen Z."/>
            <person name="Weber J."/>
            <person name="Frosch M."/>
            <person name="Fox J.G."/>
        </authorList>
    </citation>
    <scope>NUCLEOTIDE SEQUENCE [LARGE SCALE GENOMIC DNA]</scope>
    <source>
        <strain>ATCC 51449 / 3B1</strain>
    </source>
</reference>
<evidence type="ECO:0000255" key="1">
    <source>
        <dbReference type="HAMAP-Rule" id="MF_00385"/>
    </source>
</evidence>
<evidence type="ECO:0000305" key="2"/>
<gene>
    <name evidence="1" type="primary">rpsP</name>
    <name type="ordered locus">HH_0939</name>
</gene>
<sequence>MATVIRLTKMGRKKKPFYRIVVTDSRKKRDGGWIESLGYYNPLVEPALVKYDAQRLEYWKNVGAKMSERVAKLTSKK</sequence>
<accession>Q7VHM7</accession>
<name>RS16_HELHP</name>
<feature type="chain" id="PRO_0000167193" description="Small ribosomal subunit protein bS16">
    <location>
        <begin position="1"/>
        <end position="77"/>
    </location>
</feature>
<proteinExistence type="inferred from homology"/>
<keyword id="KW-1185">Reference proteome</keyword>
<keyword id="KW-0687">Ribonucleoprotein</keyword>
<keyword id="KW-0689">Ribosomal protein</keyword>
<organism>
    <name type="scientific">Helicobacter hepaticus (strain ATCC 51449 / 3B1)</name>
    <dbReference type="NCBI Taxonomy" id="235279"/>
    <lineage>
        <taxon>Bacteria</taxon>
        <taxon>Pseudomonadati</taxon>
        <taxon>Campylobacterota</taxon>
        <taxon>Epsilonproteobacteria</taxon>
        <taxon>Campylobacterales</taxon>
        <taxon>Helicobacteraceae</taxon>
        <taxon>Helicobacter</taxon>
    </lineage>
</organism>